<feature type="signal peptide" evidence="1">
    <location>
        <begin position="1"/>
        <end position="19"/>
    </location>
</feature>
<feature type="chain" id="PRO_5000116132" description="LPS-assembly lipoprotein LptE">
    <location>
        <begin position="20"/>
        <end position="207"/>
    </location>
</feature>
<feature type="region of interest" description="Disordered" evidence="2">
    <location>
        <begin position="168"/>
        <end position="207"/>
    </location>
</feature>
<feature type="compositionally biased region" description="Polar residues" evidence="2">
    <location>
        <begin position="182"/>
        <end position="207"/>
    </location>
</feature>
<feature type="lipid moiety-binding region" description="N-palmitoyl cysteine" evidence="1">
    <location>
        <position position="20"/>
    </location>
</feature>
<feature type="lipid moiety-binding region" description="S-diacylglycerol cysteine" evidence="1">
    <location>
        <position position="20"/>
    </location>
</feature>
<keyword id="KW-0998">Cell outer membrane</keyword>
<keyword id="KW-0449">Lipoprotein</keyword>
<keyword id="KW-0472">Membrane</keyword>
<keyword id="KW-0564">Palmitate</keyword>
<keyword id="KW-0732">Signal</keyword>
<gene>
    <name evidence="1" type="primary">lptE</name>
    <name type="synonym">rlpB</name>
    <name type="ordered locus">YPA_2488</name>
</gene>
<evidence type="ECO:0000255" key="1">
    <source>
        <dbReference type="HAMAP-Rule" id="MF_01186"/>
    </source>
</evidence>
<evidence type="ECO:0000256" key="2">
    <source>
        <dbReference type="SAM" id="MobiDB-lite"/>
    </source>
</evidence>
<organism>
    <name type="scientific">Yersinia pestis bv. Antiqua (strain Antiqua)</name>
    <dbReference type="NCBI Taxonomy" id="360102"/>
    <lineage>
        <taxon>Bacteria</taxon>
        <taxon>Pseudomonadati</taxon>
        <taxon>Pseudomonadota</taxon>
        <taxon>Gammaproteobacteria</taxon>
        <taxon>Enterobacterales</taxon>
        <taxon>Yersiniaceae</taxon>
        <taxon>Yersinia</taxon>
    </lineage>
</organism>
<reference key="1">
    <citation type="journal article" date="2006" name="J. Bacteriol.">
        <title>Complete genome sequence of Yersinia pestis strains Antiqua and Nepal516: evidence of gene reduction in an emerging pathogen.</title>
        <authorList>
            <person name="Chain P.S.G."/>
            <person name="Hu P."/>
            <person name="Malfatti S.A."/>
            <person name="Radnedge L."/>
            <person name="Larimer F."/>
            <person name="Vergez L.M."/>
            <person name="Worsham P."/>
            <person name="Chu M.C."/>
            <person name="Andersen G.L."/>
        </authorList>
    </citation>
    <scope>NUCLEOTIDE SEQUENCE [LARGE SCALE GENOMIC DNA]</scope>
    <source>
        <strain>Antiqua</strain>
    </source>
</reference>
<name>LPTE_YERPA</name>
<proteinExistence type="inferred from homology"/>
<comment type="function">
    <text evidence="1">Together with LptD, is involved in the assembly of lipopolysaccharide (LPS) at the surface of the outer membrane. Required for the proper assembly of LptD. Binds LPS and may serve as the LPS recognition site at the outer membrane.</text>
</comment>
<comment type="subunit">
    <text evidence="1">Component of the lipopolysaccharide transport and assembly complex. Interacts with LptD.</text>
</comment>
<comment type="subcellular location">
    <subcellularLocation>
        <location evidence="1">Cell outer membrane</location>
        <topology evidence="1">Lipid-anchor</topology>
    </subcellularLocation>
</comment>
<comment type="similarity">
    <text evidence="1">Belongs to the LptE lipoprotein family.</text>
</comment>
<protein>
    <recommendedName>
        <fullName evidence="1">LPS-assembly lipoprotein LptE</fullName>
    </recommendedName>
</protein>
<accession>Q1C520</accession>
<sequence>MRHRILTLLLGLAVLVTAGCGFNLRGTTQVPTELQKLLLESSDPYGPLARSIRQQLRLNNVTIVDDAMRKDIPTLRIIGSSESQETVSIFRNGVAAENQLVLHVQAQVLIPGHDIYPLQVNVFRTFFDNPLTALAKEAEAEVLRQEMREQAAQQLVRQLLTVHAAEVKNTQKNGDKPVSDANAAQGSTPTAVNETTLGEPAVSTSAK</sequence>
<dbReference type="EMBL" id="CP000308">
    <property type="protein sequence ID" value="ABG14452.1"/>
    <property type="molecule type" value="Genomic_DNA"/>
</dbReference>
<dbReference type="RefSeq" id="WP_002210332.1">
    <property type="nucleotide sequence ID" value="NZ_CP009906.1"/>
</dbReference>
<dbReference type="SMR" id="Q1C520"/>
<dbReference type="GeneID" id="57976086"/>
<dbReference type="KEGG" id="ypa:YPA_2488"/>
<dbReference type="Proteomes" id="UP000001971">
    <property type="component" value="Chromosome"/>
</dbReference>
<dbReference type="GO" id="GO:0009279">
    <property type="term" value="C:cell outer membrane"/>
    <property type="evidence" value="ECO:0007669"/>
    <property type="project" value="UniProtKB-SubCell"/>
</dbReference>
<dbReference type="GO" id="GO:1990351">
    <property type="term" value="C:transporter complex"/>
    <property type="evidence" value="ECO:0007669"/>
    <property type="project" value="TreeGrafter"/>
</dbReference>
<dbReference type="GO" id="GO:0001530">
    <property type="term" value="F:lipopolysaccharide binding"/>
    <property type="evidence" value="ECO:0007669"/>
    <property type="project" value="TreeGrafter"/>
</dbReference>
<dbReference type="GO" id="GO:0043165">
    <property type="term" value="P:Gram-negative-bacterium-type cell outer membrane assembly"/>
    <property type="evidence" value="ECO:0007669"/>
    <property type="project" value="UniProtKB-UniRule"/>
</dbReference>
<dbReference type="GO" id="GO:0015920">
    <property type="term" value="P:lipopolysaccharide transport"/>
    <property type="evidence" value="ECO:0007669"/>
    <property type="project" value="TreeGrafter"/>
</dbReference>
<dbReference type="Gene3D" id="3.30.160.150">
    <property type="entry name" value="Lipoprotein like domain"/>
    <property type="match status" value="1"/>
</dbReference>
<dbReference type="HAMAP" id="MF_01186">
    <property type="entry name" value="LPS_assembly_LptE"/>
    <property type="match status" value="1"/>
</dbReference>
<dbReference type="InterPro" id="IPR007485">
    <property type="entry name" value="LPS_assembly_LptE"/>
</dbReference>
<dbReference type="NCBIfam" id="NF008062">
    <property type="entry name" value="PRK10796.1"/>
    <property type="match status" value="1"/>
</dbReference>
<dbReference type="PANTHER" id="PTHR38098">
    <property type="entry name" value="LPS-ASSEMBLY LIPOPROTEIN LPTE"/>
    <property type="match status" value="1"/>
</dbReference>
<dbReference type="PANTHER" id="PTHR38098:SF1">
    <property type="entry name" value="LPS-ASSEMBLY LIPOPROTEIN LPTE"/>
    <property type="match status" value="1"/>
</dbReference>
<dbReference type="Pfam" id="PF04390">
    <property type="entry name" value="LptE"/>
    <property type="match status" value="1"/>
</dbReference>
<dbReference type="PROSITE" id="PS51257">
    <property type="entry name" value="PROKAR_LIPOPROTEIN"/>
    <property type="match status" value="1"/>
</dbReference>